<reference key="1">
    <citation type="journal article" date="1986" name="Nucleic Acids Res.">
        <title>Sequence of the chloroplast-encoded psbA gene for the QB polypeptide of petunia.</title>
        <authorList>
            <person name="Aldrich J."/>
            <person name="Cherney B."/>
            <person name="Merlin E."/>
            <person name="Christopherson L.A."/>
            <person name="Williams C."/>
        </authorList>
    </citation>
    <scope>NUCLEOTIDE SEQUENCE [GENOMIC DNA]</scope>
</reference>
<protein>
    <recommendedName>
        <fullName evidence="1">Photosystem II protein D1</fullName>
        <shortName evidence="1">PSII D1 protein</shortName>
        <ecNumber evidence="1">1.10.3.9</ecNumber>
    </recommendedName>
    <alternativeName>
        <fullName evidence="1">Photosystem II Q(B) protein</fullName>
    </alternativeName>
</protein>
<organism>
    <name type="scientific">Petunia hybrida</name>
    <name type="common">Petunia</name>
    <dbReference type="NCBI Taxonomy" id="4102"/>
    <lineage>
        <taxon>Eukaryota</taxon>
        <taxon>Viridiplantae</taxon>
        <taxon>Streptophyta</taxon>
        <taxon>Embryophyta</taxon>
        <taxon>Tracheophyta</taxon>
        <taxon>Spermatophyta</taxon>
        <taxon>Magnoliopsida</taxon>
        <taxon>eudicotyledons</taxon>
        <taxon>Gunneridae</taxon>
        <taxon>Pentapetalae</taxon>
        <taxon>asterids</taxon>
        <taxon>lamiids</taxon>
        <taxon>Solanales</taxon>
        <taxon>Solanaceae</taxon>
        <taxon>Petunioideae</taxon>
        <taxon>Petunia</taxon>
    </lineage>
</organism>
<evidence type="ECO:0000255" key="1">
    <source>
        <dbReference type="HAMAP-Rule" id="MF_01379"/>
    </source>
</evidence>
<keyword id="KW-0007">Acetylation</keyword>
<keyword id="KW-0106">Calcium</keyword>
<keyword id="KW-0148">Chlorophyll</keyword>
<keyword id="KW-0150">Chloroplast</keyword>
<keyword id="KW-0157">Chromophore</keyword>
<keyword id="KW-0249">Electron transport</keyword>
<keyword id="KW-0359">Herbicide resistance</keyword>
<keyword id="KW-0408">Iron</keyword>
<keyword id="KW-0460">Magnesium</keyword>
<keyword id="KW-0464">Manganese</keyword>
<keyword id="KW-0472">Membrane</keyword>
<keyword id="KW-0479">Metal-binding</keyword>
<keyword id="KW-0560">Oxidoreductase</keyword>
<keyword id="KW-0597">Phosphoprotein</keyword>
<keyword id="KW-0602">Photosynthesis</keyword>
<keyword id="KW-0604">Photosystem II</keyword>
<keyword id="KW-0934">Plastid</keyword>
<keyword id="KW-0793">Thylakoid</keyword>
<keyword id="KW-0812">Transmembrane</keyword>
<keyword id="KW-1133">Transmembrane helix</keyword>
<keyword id="KW-0813">Transport</keyword>
<sequence>MTAILERRESESLWGRFCNWITSSENRLYIGWFGVLMIPTLLTATSVFIIAFIAAPPVDIDGIREPVSGSLLYGNNIISGAIIPTSAAIGLHFYPIWEAASVDEWLYNGGPYELIVLHFLLGVACYMGREWELSFRLGMRPWIAVAYSAPVAAATAVFLIYPIGQGSFSDGMPLGISGTFNFMIVFQAEHNILMHPFHMLGVAGVFGGSLFSAMHGSLVTSSLIRETTENESANEGYRFGQEEETYNIVAAHGYFGRLIFQYASFNNSRSLHFFLAAWPVVGIWFTALGISTMAFNLNGFNFNQSVVDSQGRVINTWADIINRANLGMEVMHERNAHNFPLDLAAIEAPSTNG</sequence>
<gene>
    <name evidence="1" type="primary">psbA</name>
</gene>
<comment type="function">
    <text evidence="1">Photosystem II (PSII) is a light-driven water:plastoquinone oxidoreductase that uses light energy to abstract electrons from H(2)O, generating O(2) and a proton gradient subsequently used for ATP formation. It consists of a core antenna complex that captures photons, and an electron transfer chain that converts photonic excitation into a charge separation. The D1/D2 (PsbA/PsbD) reaction center heterodimer binds P680, the primary electron donor of PSII as well as several subsequent electron acceptors.</text>
</comment>
<comment type="catalytic activity">
    <reaction evidence="1">
        <text>2 a plastoquinone + 4 hnu + 2 H2O = 2 a plastoquinol + O2</text>
        <dbReference type="Rhea" id="RHEA:36359"/>
        <dbReference type="Rhea" id="RHEA-COMP:9561"/>
        <dbReference type="Rhea" id="RHEA-COMP:9562"/>
        <dbReference type="ChEBI" id="CHEBI:15377"/>
        <dbReference type="ChEBI" id="CHEBI:15379"/>
        <dbReference type="ChEBI" id="CHEBI:17757"/>
        <dbReference type="ChEBI" id="CHEBI:30212"/>
        <dbReference type="ChEBI" id="CHEBI:62192"/>
        <dbReference type="EC" id="1.10.3.9"/>
    </reaction>
</comment>
<comment type="cofactor">
    <text evidence="1">The D1/D2 heterodimer binds P680, chlorophylls that are the primary electron donor of PSII, and subsequent electron acceptors. It shares a non-heme iron and each subunit binds pheophytin, quinone, additional chlorophylls, carotenoids and lipids. D1 provides most of the ligands for the Mn4-Ca-O5 cluster of the oxygen-evolving complex (OEC). There is also a Cl(-1) ion associated with D1 and D2, which is required for oxygen evolution. The PSII complex binds additional chlorophylls, carotenoids and specific lipids.</text>
</comment>
<comment type="subunit">
    <text evidence="1">PSII is composed of 1 copy each of membrane proteins PsbA, PsbB, PsbC, PsbD, PsbE, PsbF, PsbH, PsbI, PsbJ, PsbK, PsbL, PsbM, PsbT, PsbX, PsbY, PsbZ, Psb30/Ycf12, at least 3 peripheral proteins of the oxygen-evolving complex and a large number of cofactors. It forms dimeric complexes.</text>
</comment>
<comment type="subcellular location">
    <subcellularLocation>
        <location evidence="1">Plastid</location>
        <location evidence="1">Chloroplast thylakoid membrane</location>
        <topology evidence="1">Multi-pass membrane protein</topology>
    </subcellularLocation>
</comment>
<comment type="PTM">
    <text evidence="1">Tyr-161 forms a radical intermediate that is referred to as redox-active TyrZ, YZ or Y-Z.</text>
</comment>
<comment type="PTM">
    <text evidence="1">C-terminally processed by CTPA; processing is essential to allow assembly of the oxygen-evolving complex and thus photosynthetic growth.</text>
</comment>
<comment type="miscellaneous">
    <text evidence="1">2 of the reaction center chlorophylls (ChlD1 and ChlD2) are entirely coordinated by water.</text>
</comment>
<comment type="miscellaneous">
    <text evidence="1">Herbicides such as atrazine, BNT, diuron or ioxynil bind in the Q(B) binding site and block subsequent electron transfer.</text>
</comment>
<comment type="similarity">
    <text evidence="1">Belongs to the reaction center PufL/M/PsbA/D family.</text>
</comment>
<proteinExistence type="inferred from homology"/>
<name>PSBA_PETHY</name>
<accession>P04999</accession>
<geneLocation type="chloroplast"/>
<dbReference type="EC" id="1.10.3.9" evidence="1"/>
<dbReference type="EMBL" id="X04974">
    <property type="protein sequence ID" value="CAA28647.1"/>
    <property type="molecule type" value="Genomic_DNA"/>
</dbReference>
<dbReference type="SMR" id="P04999"/>
<dbReference type="GO" id="GO:0009535">
    <property type="term" value="C:chloroplast thylakoid membrane"/>
    <property type="evidence" value="ECO:0007669"/>
    <property type="project" value="UniProtKB-SubCell"/>
</dbReference>
<dbReference type="GO" id="GO:0009523">
    <property type="term" value="C:photosystem II"/>
    <property type="evidence" value="ECO:0007669"/>
    <property type="project" value="UniProtKB-KW"/>
</dbReference>
<dbReference type="GO" id="GO:0016168">
    <property type="term" value="F:chlorophyll binding"/>
    <property type="evidence" value="ECO:0007669"/>
    <property type="project" value="UniProtKB-UniRule"/>
</dbReference>
<dbReference type="GO" id="GO:0045156">
    <property type="term" value="F:electron transporter, transferring electrons within the cyclic electron transport pathway of photosynthesis activity"/>
    <property type="evidence" value="ECO:0007669"/>
    <property type="project" value="InterPro"/>
</dbReference>
<dbReference type="GO" id="GO:0005506">
    <property type="term" value="F:iron ion binding"/>
    <property type="evidence" value="ECO:0007669"/>
    <property type="project" value="UniProtKB-UniRule"/>
</dbReference>
<dbReference type="GO" id="GO:0016682">
    <property type="term" value="F:oxidoreductase activity, acting on diphenols and related substances as donors, oxygen as acceptor"/>
    <property type="evidence" value="ECO:0007669"/>
    <property type="project" value="UniProtKB-UniRule"/>
</dbReference>
<dbReference type="GO" id="GO:0010242">
    <property type="term" value="F:oxygen evolving activity"/>
    <property type="evidence" value="ECO:0007669"/>
    <property type="project" value="UniProtKB-EC"/>
</dbReference>
<dbReference type="GO" id="GO:0009772">
    <property type="term" value="P:photosynthetic electron transport in photosystem II"/>
    <property type="evidence" value="ECO:0007669"/>
    <property type="project" value="InterPro"/>
</dbReference>
<dbReference type="GO" id="GO:0009635">
    <property type="term" value="P:response to herbicide"/>
    <property type="evidence" value="ECO:0007669"/>
    <property type="project" value="UniProtKB-KW"/>
</dbReference>
<dbReference type="CDD" id="cd09289">
    <property type="entry name" value="Photosystem-II_D1"/>
    <property type="match status" value="1"/>
</dbReference>
<dbReference type="FunFam" id="1.20.85.10:FF:000002">
    <property type="entry name" value="Photosystem II protein D1"/>
    <property type="match status" value="1"/>
</dbReference>
<dbReference type="Gene3D" id="1.20.85.10">
    <property type="entry name" value="Photosystem II protein D1-like"/>
    <property type="match status" value="1"/>
</dbReference>
<dbReference type="HAMAP" id="MF_01379">
    <property type="entry name" value="PSII_PsbA_D1"/>
    <property type="match status" value="1"/>
</dbReference>
<dbReference type="InterPro" id="IPR055266">
    <property type="entry name" value="D1/D2"/>
</dbReference>
<dbReference type="InterPro" id="IPR036854">
    <property type="entry name" value="Photo_II_D1/D2_sf"/>
</dbReference>
<dbReference type="InterPro" id="IPR000484">
    <property type="entry name" value="Photo_RC_L/M"/>
</dbReference>
<dbReference type="InterPro" id="IPR055265">
    <property type="entry name" value="Photo_RC_L/M_CS"/>
</dbReference>
<dbReference type="InterPro" id="IPR005867">
    <property type="entry name" value="PSII_D1"/>
</dbReference>
<dbReference type="NCBIfam" id="TIGR01151">
    <property type="entry name" value="psbA"/>
    <property type="match status" value="1"/>
</dbReference>
<dbReference type="PANTHER" id="PTHR33149:SF12">
    <property type="entry name" value="PHOTOSYSTEM II D2 PROTEIN"/>
    <property type="match status" value="1"/>
</dbReference>
<dbReference type="PANTHER" id="PTHR33149">
    <property type="entry name" value="PHOTOSYSTEM II PROTEIN D1"/>
    <property type="match status" value="1"/>
</dbReference>
<dbReference type="Pfam" id="PF00124">
    <property type="entry name" value="Photo_RC"/>
    <property type="match status" value="1"/>
</dbReference>
<dbReference type="PRINTS" id="PR00256">
    <property type="entry name" value="REACTNCENTRE"/>
</dbReference>
<dbReference type="SUPFAM" id="SSF81483">
    <property type="entry name" value="Bacterial photosystem II reaction centre, L and M subunits"/>
    <property type="match status" value="1"/>
</dbReference>
<dbReference type="PROSITE" id="PS00244">
    <property type="entry name" value="REACTION_CENTER"/>
    <property type="match status" value="1"/>
</dbReference>
<feature type="initiator methionine" description="Removed" evidence="1">
    <location>
        <position position="1"/>
    </location>
</feature>
<feature type="chain" id="PRO_0000090461" description="Photosystem II protein D1" evidence="1">
    <location>
        <begin position="2"/>
        <end position="344"/>
    </location>
</feature>
<feature type="propeptide" id="PRO_0000316472" evidence="1">
    <location>
        <begin position="345"/>
        <end position="353"/>
    </location>
</feature>
<feature type="transmembrane region" description="Helical" evidence="1">
    <location>
        <begin position="29"/>
        <end position="46"/>
    </location>
</feature>
<feature type="transmembrane region" description="Helical" evidence="1">
    <location>
        <begin position="118"/>
        <end position="133"/>
    </location>
</feature>
<feature type="transmembrane region" description="Helical" evidence="1">
    <location>
        <begin position="142"/>
        <end position="156"/>
    </location>
</feature>
<feature type="transmembrane region" description="Helical" evidence="1">
    <location>
        <begin position="197"/>
        <end position="218"/>
    </location>
</feature>
<feature type="transmembrane region" description="Helical" evidence="1">
    <location>
        <begin position="274"/>
        <end position="288"/>
    </location>
</feature>
<feature type="binding site" description="axial binding residue" evidence="1">
    <location>
        <position position="118"/>
    </location>
    <ligand>
        <name>chlorophyll a</name>
        <dbReference type="ChEBI" id="CHEBI:58416"/>
        <label>ChlzD1</label>
    </ligand>
    <ligandPart>
        <name>Mg</name>
        <dbReference type="ChEBI" id="CHEBI:25107"/>
    </ligandPart>
</feature>
<feature type="binding site" evidence="1">
    <location>
        <position position="126"/>
    </location>
    <ligand>
        <name>pheophytin a</name>
        <dbReference type="ChEBI" id="CHEBI:136840"/>
        <label>D1</label>
    </ligand>
</feature>
<feature type="binding site" evidence="1">
    <location>
        <position position="170"/>
    </location>
    <ligand>
        <name>[CaMn4O5] cluster</name>
        <dbReference type="ChEBI" id="CHEBI:189552"/>
    </ligand>
</feature>
<feature type="binding site" evidence="1">
    <location>
        <position position="189"/>
    </location>
    <ligand>
        <name>[CaMn4O5] cluster</name>
        <dbReference type="ChEBI" id="CHEBI:189552"/>
    </ligand>
</feature>
<feature type="binding site" description="axial binding residue" evidence="1">
    <location>
        <position position="198"/>
    </location>
    <ligand>
        <name>chlorophyll a</name>
        <dbReference type="ChEBI" id="CHEBI:58416"/>
        <label>PD1</label>
    </ligand>
    <ligandPart>
        <name>Mg</name>
        <dbReference type="ChEBI" id="CHEBI:25107"/>
    </ligandPart>
</feature>
<feature type="binding site" evidence="1">
    <location>
        <position position="215"/>
    </location>
    <ligand>
        <name>a quinone</name>
        <dbReference type="ChEBI" id="CHEBI:132124"/>
        <label>B</label>
    </ligand>
</feature>
<feature type="binding site" evidence="1">
    <location>
        <position position="215"/>
    </location>
    <ligand>
        <name>Fe cation</name>
        <dbReference type="ChEBI" id="CHEBI:24875"/>
        <note>ligand shared with heterodimeric partner</note>
    </ligand>
</feature>
<feature type="binding site" evidence="1">
    <location>
        <begin position="264"/>
        <end position="265"/>
    </location>
    <ligand>
        <name>a quinone</name>
        <dbReference type="ChEBI" id="CHEBI:132124"/>
        <label>B</label>
    </ligand>
</feature>
<feature type="binding site" evidence="1">
    <location>
        <position position="272"/>
    </location>
    <ligand>
        <name>Fe cation</name>
        <dbReference type="ChEBI" id="CHEBI:24875"/>
        <note>ligand shared with heterodimeric partner</note>
    </ligand>
</feature>
<feature type="binding site" evidence="1">
    <location>
        <position position="332"/>
    </location>
    <ligand>
        <name>[CaMn4O5] cluster</name>
        <dbReference type="ChEBI" id="CHEBI:189552"/>
    </ligand>
</feature>
<feature type="binding site" evidence="1">
    <location>
        <position position="333"/>
    </location>
    <ligand>
        <name>[CaMn4O5] cluster</name>
        <dbReference type="ChEBI" id="CHEBI:189552"/>
    </ligand>
</feature>
<feature type="binding site" evidence="1">
    <location>
        <position position="342"/>
    </location>
    <ligand>
        <name>[CaMn4O5] cluster</name>
        <dbReference type="ChEBI" id="CHEBI:189552"/>
    </ligand>
</feature>
<feature type="binding site" evidence="1">
    <location>
        <position position="344"/>
    </location>
    <ligand>
        <name>[CaMn4O5] cluster</name>
        <dbReference type="ChEBI" id="CHEBI:189552"/>
    </ligand>
</feature>
<feature type="site" description="Tyrosine radical intermediate" evidence="1">
    <location>
        <position position="161"/>
    </location>
</feature>
<feature type="site" description="Stabilizes free radical intermediate" evidence="1">
    <location>
        <position position="190"/>
    </location>
</feature>
<feature type="site" description="Cleavage; by CTPA" evidence="1">
    <location>
        <begin position="344"/>
        <end position="345"/>
    </location>
</feature>
<feature type="modified residue" description="N-acetylthreonine" evidence="1">
    <location>
        <position position="2"/>
    </location>
</feature>
<feature type="modified residue" description="Phosphothreonine" evidence="1">
    <location>
        <position position="2"/>
    </location>
</feature>